<protein>
    <recommendedName>
        <fullName evidence="1">Isopentenyl-diphosphate delta-isomerase</fullName>
        <shortName evidence="1">IPP isomerase</shortName>
        <ecNumber evidence="1">5.3.3.2</ecNumber>
    </recommendedName>
    <alternativeName>
        <fullName evidence="1">Isopentenyl diphosphate:dimethylallyl diphosphate isomerase</fullName>
    </alternativeName>
    <alternativeName>
        <fullName evidence="1">Isopentenyl pyrophosphate isomerase</fullName>
    </alternativeName>
    <alternativeName>
        <fullName evidence="1">Type 2 isopentenyl diphosphate isomerase</fullName>
        <shortName evidence="1">IDI-2</shortName>
    </alternativeName>
</protein>
<keyword id="KW-0963">Cytoplasm</keyword>
<keyword id="KW-0285">Flavoprotein</keyword>
<keyword id="KW-0288">FMN</keyword>
<keyword id="KW-0413">Isomerase</keyword>
<keyword id="KW-0414">Isoprene biosynthesis</keyword>
<keyword id="KW-0460">Magnesium</keyword>
<keyword id="KW-0479">Metal-binding</keyword>
<keyword id="KW-0521">NADP</keyword>
<gene>
    <name evidence="1" type="primary">fni</name>
    <name type="ordered locus">SaurJH1_2416</name>
</gene>
<comment type="function">
    <text evidence="1">Involved in the biosynthesis of isoprenoids. Catalyzes the 1,3-allylic rearrangement of the homoallylic substrate isopentenyl (IPP) to its allylic isomer, dimethylallyl diphosphate (DMAPP).</text>
</comment>
<comment type="catalytic activity">
    <reaction evidence="1">
        <text>isopentenyl diphosphate = dimethylallyl diphosphate</text>
        <dbReference type="Rhea" id="RHEA:23284"/>
        <dbReference type="ChEBI" id="CHEBI:57623"/>
        <dbReference type="ChEBI" id="CHEBI:128769"/>
        <dbReference type="EC" id="5.3.3.2"/>
    </reaction>
</comment>
<comment type="cofactor">
    <cofactor evidence="1">
        <name>FMN</name>
        <dbReference type="ChEBI" id="CHEBI:58210"/>
    </cofactor>
</comment>
<comment type="cofactor">
    <cofactor evidence="1">
        <name>NADPH</name>
        <dbReference type="ChEBI" id="CHEBI:57783"/>
    </cofactor>
</comment>
<comment type="cofactor">
    <cofactor evidence="1">
        <name>Mg(2+)</name>
        <dbReference type="ChEBI" id="CHEBI:18420"/>
    </cofactor>
</comment>
<comment type="subunit">
    <text evidence="1">Homooctamer. Dimer of tetramers.</text>
</comment>
<comment type="subcellular location">
    <subcellularLocation>
        <location evidence="1">Cytoplasm</location>
    </subcellularLocation>
</comment>
<comment type="similarity">
    <text evidence="1">Belongs to the IPP isomerase type 2 family.</text>
</comment>
<name>IDI2_STAA2</name>
<proteinExistence type="inferred from homology"/>
<accession>A6U473</accession>
<reference key="1">
    <citation type="submission" date="2007-06" db="EMBL/GenBank/DDBJ databases">
        <title>Complete sequence of chromosome of Staphylococcus aureus subsp. aureus JH1.</title>
        <authorList>
            <consortium name="US DOE Joint Genome Institute"/>
            <person name="Copeland A."/>
            <person name="Lucas S."/>
            <person name="Lapidus A."/>
            <person name="Barry K."/>
            <person name="Detter J.C."/>
            <person name="Glavina del Rio T."/>
            <person name="Hammon N."/>
            <person name="Israni S."/>
            <person name="Dalin E."/>
            <person name="Tice H."/>
            <person name="Pitluck S."/>
            <person name="Chain P."/>
            <person name="Malfatti S."/>
            <person name="Shin M."/>
            <person name="Vergez L."/>
            <person name="Schmutz J."/>
            <person name="Larimer F."/>
            <person name="Land M."/>
            <person name="Hauser L."/>
            <person name="Kyrpides N."/>
            <person name="Ivanova N."/>
            <person name="Tomasz A."/>
            <person name="Richardson P."/>
        </authorList>
    </citation>
    <scope>NUCLEOTIDE SEQUENCE [LARGE SCALE GENOMIC DNA]</scope>
    <source>
        <strain>JH1</strain>
    </source>
</reference>
<evidence type="ECO:0000255" key="1">
    <source>
        <dbReference type="HAMAP-Rule" id="MF_00354"/>
    </source>
</evidence>
<feature type="chain" id="PRO_1000079383" description="Isopentenyl-diphosphate delta-isomerase">
    <location>
        <begin position="1"/>
        <end position="349"/>
    </location>
</feature>
<feature type="binding site" evidence="1">
    <location>
        <begin position="9"/>
        <end position="10"/>
    </location>
    <ligand>
        <name>substrate</name>
    </ligand>
</feature>
<feature type="binding site" evidence="1">
    <location>
        <begin position="65"/>
        <end position="67"/>
    </location>
    <ligand>
        <name>FMN</name>
        <dbReference type="ChEBI" id="CHEBI:58210"/>
    </ligand>
</feature>
<feature type="binding site" evidence="1">
    <location>
        <begin position="95"/>
        <end position="97"/>
    </location>
    <ligand>
        <name>substrate</name>
    </ligand>
</feature>
<feature type="binding site" evidence="1">
    <location>
        <position position="95"/>
    </location>
    <ligand>
        <name>FMN</name>
        <dbReference type="ChEBI" id="CHEBI:58210"/>
    </ligand>
</feature>
<feature type="binding site" evidence="1">
    <location>
        <position position="124"/>
    </location>
    <ligand>
        <name>FMN</name>
        <dbReference type="ChEBI" id="CHEBI:58210"/>
    </ligand>
</feature>
<feature type="binding site" evidence="1">
    <location>
        <position position="154"/>
    </location>
    <ligand>
        <name>substrate</name>
    </ligand>
</feature>
<feature type="binding site" evidence="1">
    <location>
        <position position="155"/>
    </location>
    <ligand>
        <name>Mg(2+)</name>
        <dbReference type="ChEBI" id="CHEBI:18420"/>
    </ligand>
</feature>
<feature type="binding site" evidence="1">
    <location>
        <position position="186"/>
    </location>
    <ligand>
        <name>FMN</name>
        <dbReference type="ChEBI" id="CHEBI:58210"/>
    </ligand>
</feature>
<feature type="binding site" evidence="1">
    <location>
        <position position="211"/>
    </location>
    <ligand>
        <name>FMN</name>
        <dbReference type="ChEBI" id="CHEBI:58210"/>
    </ligand>
</feature>
<feature type="binding site" evidence="1">
    <location>
        <position position="216"/>
    </location>
    <ligand>
        <name>FMN</name>
        <dbReference type="ChEBI" id="CHEBI:58210"/>
    </ligand>
</feature>
<feature type="binding site" evidence="1">
    <location>
        <begin position="262"/>
        <end position="264"/>
    </location>
    <ligand>
        <name>FMN</name>
        <dbReference type="ChEBI" id="CHEBI:58210"/>
    </ligand>
</feature>
<feature type="binding site" evidence="1">
    <location>
        <begin position="283"/>
        <end position="284"/>
    </location>
    <ligand>
        <name>FMN</name>
        <dbReference type="ChEBI" id="CHEBI:58210"/>
    </ligand>
</feature>
<dbReference type="EC" id="5.3.3.2" evidence="1"/>
<dbReference type="EMBL" id="CP000736">
    <property type="protein sequence ID" value="ABR53241.1"/>
    <property type="molecule type" value="Genomic_DNA"/>
</dbReference>
<dbReference type="SMR" id="A6U473"/>
<dbReference type="KEGG" id="sah:SaurJH1_2416"/>
<dbReference type="HOGENOM" id="CLU_065515_0_0_9"/>
<dbReference type="GO" id="GO:0005737">
    <property type="term" value="C:cytoplasm"/>
    <property type="evidence" value="ECO:0007669"/>
    <property type="project" value="UniProtKB-SubCell"/>
</dbReference>
<dbReference type="GO" id="GO:0010181">
    <property type="term" value="F:FMN binding"/>
    <property type="evidence" value="ECO:0007669"/>
    <property type="project" value="UniProtKB-UniRule"/>
</dbReference>
<dbReference type="GO" id="GO:0004452">
    <property type="term" value="F:isopentenyl-diphosphate delta-isomerase activity"/>
    <property type="evidence" value="ECO:0007669"/>
    <property type="project" value="UniProtKB-UniRule"/>
</dbReference>
<dbReference type="GO" id="GO:0000287">
    <property type="term" value="F:magnesium ion binding"/>
    <property type="evidence" value="ECO:0007669"/>
    <property type="project" value="UniProtKB-UniRule"/>
</dbReference>
<dbReference type="GO" id="GO:0070402">
    <property type="term" value="F:NADPH binding"/>
    <property type="evidence" value="ECO:0007669"/>
    <property type="project" value="UniProtKB-UniRule"/>
</dbReference>
<dbReference type="GO" id="GO:0016491">
    <property type="term" value="F:oxidoreductase activity"/>
    <property type="evidence" value="ECO:0007669"/>
    <property type="project" value="InterPro"/>
</dbReference>
<dbReference type="GO" id="GO:0008299">
    <property type="term" value="P:isoprenoid biosynthetic process"/>
    <property type="evidence" value="ECO:0007669"/>
    <property type="project" value="UniProtKB-UniRule"/>
</dbReference>
<dbReference type="CDD" id="cd02811">
    <property type="entry name" value="IDI-2_FMN"/>
    <property type="match status" value="1"/>
</dbReference>
<dbReference type="Gene3D" id="3.20.20.70">
    <property type="entry name" value="Aldolase class I"/>
    <property type="match status" value="1"/>
</dbReference>
<dbReference type="HAMAP" id="MF_00354">
    <property type="entry name" value="Idi_2"/>
    <property type="match status" value="1"/>
</dbReference>
<dbReference type="InterPro" id="IPR013785">
    <property type="entry name" value="Aldolase_TIM"/>
</dbReference>
<dbReference type="InterPro" id="IPR000262">
    <property type="entry name" value="FMN-dep_DH"/>
</dbReference>
<dbReference type="InterPro" id="IPR011179">
    <property type="entry name" value="IPdP_isomerase"/>
</dbReference>
<dbReference type="NCBIfam" id="TIGR02151">
    <property type="entry name" value="IPP_isom_2"/>
    <property type="match status" value="1"/>
</dbReference>
<dbReference type="PANTHER" id="PTHR43665">
    <property type="entry name" value="ISOPENTENYL-DIPHOSPHATE DELTA-ISOMERASE"/>
    <property type="match status" value="1"/>
</dbReference>
<dbReference type="PANTHER" id="PTHR43665:SF1">
    <property type="entry name" value="ISOPENTENYL-DIPHOSPHATE DELTA-ISOMERASE"/>
    <property type="match status" value="1"/>
</dbReference>
<dbReference type="Pfam" id="PF01070">
    <property type="entry name" value="FMN_dh"/>
    <property type="match status" value="1"/>
</dbReference>
<dbReference type="PIRSF" id="PIRSF003314">
    <property type="entry name" value="IPP_isomerase"/>
    <property type="match status" value="1"/>
</dbReference>
<dbReference type="SUPFAM" id="SSF51395">
    <property type="entry name" value="FMN-linked oxidoreductases"/>
    <property type="match status" value="1"/>
</dbReference>
<organism>
    <name type="scientific">Staphylococcus aureus (strain JH1)</name>
    <dbReference type="NCBI Taxonomy" id="359787"/>
    <lineage>
        <taxon>Bacteria</taxon>
        <taxon>Bacillati</taxon>
        <taxon>Bacillota</taxon>
        <taxon>Bacilli</taxon>
        <taxon>Bacillales</taxon>
        <taxon>Staphylococcaceae</taxon>
        <taxon>Staphylococcus</taxon>
    </lineage>
</organism>
<sequence length="349" mass="38775">MSDFQREQRKNEHVEIAMAQSDAMHSDFDKMRFVHHSIPSINVNDIDLTSQTPDLTMAYPIYINAMTGGSEWTKNINEKLAVVARETGLAMAVGSTHAALRNPRMAETFTIARKMNPEGMIFSNVGADVPVEKALEAVELLEAQALQIHVNSPQELVMPEGNREFVTWLDNIASIVSRVSVPVIIKEVGFGMSKELMHDLQQIGVKYVDVSGKGGTNFVDIENERRANKDMDYLSSWGQSTVESLLETTAYQSEISVFASGGLRTPLDAIKSLALGAKATGMSRPFLNQVENNGIAHTVAYVESFIEHMKSIMTMLDAKNIDDLTQKQIVFSPEIMSWIEQRSLNIHRG</sequence>